<gene>
    <name type="primary">ASK10</name>
    <name type="synonym">RGC2</name>
    <name type="ordered locus">YGR097W</name>
</gene>
<protein>
    <recommendedName>
        <fullName>Activator of SKN7 protein 10</fullName>
    </recommendedName>
    <alternativeName>
        <fullName>Regulator of the glycerol channel 2</fullName>
    </alternativeName>
</protein>
<proteinExistence type="evidence at protein level"/>
<name>ASK10_YEAST</name>
<feature type="chain" id="PRO_0000064699" description="Activator of SKN7 protein 10">
    <location>
        <begin position="1"/>
        <end position="1146"/>
    </location>
</feature>
<feature type="domain" description="PH">
    <location>
        <begin position="482"/>
        <end position="606"/>
    </location>
</feature>
<feature type="region of interest" description="Disordered" evidence="1">
    <location>
        <begin position="1"/>
        <end position="32"/>
    </location>
</feature>
<feature type="region of interest" description="Disordered" evidence="1">
    <location>
        <begin position="171"/>
        <end position="194"/>
    </location>
</feature>
<feature type="region of interest" description="Disordered" evidence="1">
    <location>
        <begin position="553"/>
        <end position="575"/>
    </location>
</feature>
<feature type="region of interest" description="Disordered" evidence="1">
    <location>
        <begin position="835"/>
        <end position="854"/>
    </location>
</feature>
<feature type="region of interest" description="Disordered" evidence="1">
    <location>
        <begin position="909"/>
        <end position="982"/>
    </location>
</feature>
<feature type="region of interest" description="Disordered" evidence="1">
    <location>
        <begin position="1124"/>
        <end position="1146"/>
    </location>
</feature>
<feature type="compositionally biased region" description="Polar residues" evidence="1">
    <location>
        <begin position="1"/>
        <end position="15"/>
    </location>
</feature>
<feature type="compositionally biased region" description="Low complexity" evidence="1">
    <location>
        <begin position="564"/>
        <end position="575"/>
    </location>
</feature>
<feature type="compositionally biased region" description="Low complexity" evidence="1">
    <location>
        <begin position="912"/>
        <end position="924"/>
    </location>
</feature>
<feature type="compositionally biased region" description="Polar residues" evidence="1">
    <location>
        <begin position="939"/>
        <end position="950"/>
    </location>
</feature>
<feature type="compositionally biased region" description="Low complexity" evidence="1">
    <location>
        <begin position="958"/>
        <end position="968"/>
    </location>
</feature>
<feature type="compositionally biased region" description="Polar residues" evidence="1">
    <location>
        <begin position="969"/>
        <end position="982"/>
    </location>
</feature>
<feature type="compositionally biased region" description="Polar residues" evidence="1">
    <location>
        <begin position="1132"/>
        <end position="1146"/>
    </location>
</feature>
<feature type="modified residue" description="Phosphoserine" evidence="6">
    <location>
        <position position="344"/>
    </location>
</feature>
<feature type="modified residue" description="Phosphoserine" evidence="7">
    <location>
        <position position="793"/>
    </location>
</feature>
<feature type="modified residue" description="Phosphothreonine" evidence="8">
    <location>
        <position position="808"/>
    </location>
</feature>
<feature type="modified residue" description="Phosphoserine" evidence="9">
    <location>
        <position position="944"/>
    </location>
</feature>
<feature type="modified residue" description="Phosphoserine" evidence="9">
    <location>
        <position position="969"/>
    </location>
</feature>
<feature type="modified residue" description="Phosphothreonine" evidence="7">
    <location>
        <position position="1017"/>
    </location>
</feature>
<feature type="modified residue" description="Phosphoserine" evidence="6 8 9">
    <location>
        <position position="1070"/>
    </location>
</feature>
<feature type="modified residue" description="Phosphoserine" evidence="9">
    <location>
        <position position="1095"/>
    </location>
</feature>
<feature type="modified residue" description="Phosphoserine" evidence="9">
    <location>
        <position position="1098"/>
    </location>
</feature>
<feature type="sequence conflict" description="In Ref. 1; AAA67368." evidence="5" ref="1">
    <original>I</original>
    <variation>T</variation>
    <location>
        <position position="57"/>
    </location>
</feature>
<feature type="sequence conflict" description="In Ref. 1; AAA67368." evidence="5" ref="1">
    <original>T</original>
    <variation>N</variation>
    <location>
        <position position="346"/>
    </location>
</feature>
<feature type="sequence conflict" description="In Ref. 1; AAA67368." evidence="5" ref="1">
    <original>P</original>
    <variation>R</variation>
    <location>
        <position position="464"/>
    </location>
</feature>
<feature type="sequence conflict" description="In Ref. 1; AAA67368." evidence="5" ref="1">
    <original>V</original>
    <variation>A</variation>
    <location>
        <position position="467"/>
    </location>
</feature>
<feature type="sequence conflict" description="In Ref. 1; AAA67368." evidence="5" ref="1">
    <original>A</original>
    <variation>V</variation>
    <location>
        <position position="603"/>
    </location>
</feature>
<feature type="sequence conflict" description="In Ref. 1; AAA67368." evidence="5" ref="1">
    <original>L</original>
    <variation>P</variation>
    <location>
        <position position="906"/>
    </location>
</feature>
<reference key="1">
    <citation type="journal article" date="1996" name="Yeast">
        <title>Identification of ASK10 as a multicopy activator of Skn7p-dependent transcription of a HIS3 reporter gene.</title>
        <authorList>
            <person name="Page N."/>
            <person name="Sheraton J."/>
            <person name="Brown J.L."/>
            <person name="Stewart R.S."/>
            <person name="Bussey H."/>
        </authorList>
    </citation>
    <scope>NUCLEOTIDE SEQUENCE [GENOMIC DNA]</scope>
    <source>
        <strain>ATCC 96099 / S288c / SEY6210</strain>
    </source>
</reference>
<reference key="2">
    <citation type="journal article" date="1997" name="Nature">
        <title>The nucleotide sequence of Saccharomyces cerevisiae chromosome VII.</title>
        <authorList>
            <person name="Tettelin H."/>
            <person name="Agostoni-Carbone M.L."/>
            <person name="Albermann K."/>
            <person name="Albers M."/>
            <person name="Arroyo J."/>
            <person name="Backes U."/>
            <person name="Barreiros T."/>
            <person name="Bertani I."/>
            <person name="Bjourson A.J."/>
            <person name="Brueckner M."/>
            <person name="Bruschi C.V."/>
            <person name="Carignani G."/>
            <person name="Castagnoli L."/>
            <person name="Cerdan E."/>
            <person name="Clemente M.L."/>
            <person name="Coblenz A."/>
            <person name="Coglievina M."/>
            <person name="Coissac E."/>
            <person name="Defoor E."/>
            <person name="Del Bino S."/>
            <person name="Delius H."/>
            <person name="Delneri D."/>
            <person name="de Wergifosse P."/>
            <person name="Dujon B."/>
            <person name="Durand P."/>
            <person name="Entian K.-D."/>
            <person name="Eraso P."/>
            <person name="Escribano V."/>
            <person name="Fabiani L."/>
            <person name="Fartmann B."/>
            <person name="Feroli F."/>
            <person name="Feuermann M."/>
            <person name="Frontali L."/>
            <person name="Garcia-Gonzalez M."/>
            <person name="Garcia-Saez M.I."/>
            <person name="Goffeau A."/>
            <person name="Guerreiro P."/>
            <person name="Hani J."/>
            <person name="Hansen M."/>
            <person name="Hebling U."/>
            <person name="Hernandez K."/>
            <person name="Heumann K."/>
            <person name="Hilger F."/>
            <person name="Hofmann B."/>
            <person name="Indge K.J."/>
            <person name="James C.M."/>
            <person name="Klima R."/>
            <person name="Koetter P."/>
            <person name="Kramer B."/>
            <person name="Kramer W."/>
            <person name="Lauquin G."/>
            <person name="Leuther H."/>
            <person name="Louis E.J."/>
            <person name="Maillier E."/>
            <person name="Marconi A."/>
            <person name="Martegani E."/>
            <person name="Mazon M.J."/>
            <person name="Mazzoni C."/>
            <person name="McReynolds A.D.K."/>
            <person name="Melchioretto P."/>
            <person name="Mewes H.-W."/>
            <person name="Minenkova O."/>
            <person name="Mueller-Auer S."/>
            <person name="Nawrocki A."/>
            <person name="Netter P."/>
            <person name="Neu R."/>
            <person name="Nombela C."/>
            <person name="Oliver S.G."/>
            <person name="Panzeri L."/>
            <person name="Paoluzi S."/>
            <person name="Plevani P."/>
            <person name="Portetelle D."/>
            <person name="Portillo F."/>
            <person name="Potier S."/>
            <person name="Purnelle B."/>
            <person name="Rieger M."/>
            <person name="Riles L."/>
            <person name="Rinaldi T."/>
            <person name="Robben J."/>
            <person name="Rodrigues-Pousada C."/>
            <person name="Rodriguez-Belmonte E."/>
            <person name="Rodriguez-Torres A.M."/>
            <person name="Rose M."/>
            <person name="Ruzzi M."/>
            <person name="Saliola M."/>
            <person name="Sanchez-Perez M."/>
            <person name="Schaefer B."/>
            <person name="Schaefer M."/>
            <person name="Scharfe M."/>
            <person name="Schmidheini T."/>
            <person name="Schreer A."/>
            <person name="Skala J."/>
            <person name="Souciet J.-L."/>
            <person name="Steensma H.Y."/>
            <person name="Talla E."/>
            <person name="Thierry A."/>
            <person name="Vandenbol M."/>
            <person name="van der Aart Q.J.M."/>
            <person name="Van Dyck L."/>
            <person name="Vanoni M."/>
            <person name="Verhasselt P."/>
            <person name="Voet M."/>
            <person name="Volckaert G."/>
            <person name="Wambutt R."/>
            <person name="Watson M.D."/>
            <person name="Weber N."/>
            <person name="Wedler E."/>
            <person name="Wedler H."/>
            <person name="Wipfli P."/>
            <person name="Wolf K."/>
            <person name="Wright L.F."/>
            <person name="Zaccaria P."/>
            <person name="Zimmermann M."/>
            <person name="Zollner A."/>
            <person name="Kleine K."/>
        </authorList>
    </citation>
    <scope>NUCLEOTIDE SEQUENCE [LARGE SCALE GENOMIC DNA]</scope>
    <source>
        <strain>ATCC 204508 / S288c</strain>
    </source>
</reference>
<reference key="3">
    <citation type="journal article" date="2014" name="G3 (Bethesda)">
        <title>The reference genome sequence of Saccharomyces cerevisiae: Then and now.</title>
        <authorList>
            <person name="Engel S.R."/>
            <person name="Dietrich F.S."/>
            <person name="Fisk D.G."/>
            <person name="Binkley G."/>
            <person name="Balakrishnan R."/>
            <person name="Costanzo M.C."/>
            <person name="Dwight S.S."/>
            <person name="Hitz B.C."/>
            <person name="Karra K."/>
            <person name="Nash R.S."/>
            <person name="Weng S."/>
            <person name="Wong E.D."/>
            <person name="Lloyd P."/>
            <person name="Skrzypek M.S."/>
            <person name="Miyasato S.R."/>
            <person name="Simison M."/>
            <person name="Cherry J.M."/>
        </authorList>
    </citation>
    <scope>GENOME REANNOTATION</scope>
    <source>
        <strain>ATCC 204508 / S288c</strain>
    </source>
</reference>
<reference key="4">
    <citation type="journal article" date="2003" name="Eukaryot. Cell">
        <title>Ask10p mediates the oxidative stress-induced destruction of the Saccharomyces cerevisiae C-type cyclin Ume3p/Srb11p.</title>
        <authorList>
            <person name="Cohen T.J."/>
            <person name="Lee K."/>
            <person name="Rutkowski L.H."/>
            <person name="Strich R."/>
        </authorList>
    </citation>
    <scope>FUNCTION</scope>
    <scope>IDENTIFICATION IN THE RNA POLYMERASE II HOLOENZYME</scope>
    <scope>INTERACTION WITH RPO21 AND SSN8</scope>
    <scope>PHOSPHORYLATION</scope>
</reference>
<reference key="5">
    <citation type="journal article" date="2003" name="Nature">
        <title>Global analysis of protein localization in budding yeast.</title>
        <authorList>
            <person name="Huh W.-K."/>
            <person name="Falvo J.V."/>
            <person name="Gerke L.C."/>
            <person name="Carroll A.S."/>
            <person name="Howson R.W."/>
            <person name="Weissman J.S."/>
            <person name="O'Shea E.K."/>
        </authorList>
    </citation>
    <scope>SUBCELLULAR LOCATION [LARGE SCALE ANALYSIS]</scope>
</reference>
<reference key="6">
    <citation type="journal article" date="2005" name="Mol. Cell. Proteomics">
        <title>Quantitative phosphoproteomics applied to the yeast pheromone signaling pathway.</title>
        <authorList>
            <person name="Gruhler A."/>
            <person name="Olsen J.V."/>
            <person name="Mohammed S."/>
            <person name="Mortensen P."/>
            <person name="Faergeman N.J."/>
            <person name="Mann M."/>
            <person name="Jensen O.N."/>
        </authorList>
    </citation>
    <scope>IDENTIFICATION BY MASS SPECTROMETRY [LARGE SCALE ANALYSIS]</scope>
    <source>
        <strain>YAL6B</strain>
    </source>
</reference>
<reference key="7">
    <citation type="journal article" date="2007" name="J. Proteome Res.">
        <title>Large-scale phosphorylation analysis of alpha-factor-arrested Saccharomyces cerevisiae.</title>
        <authorList>
            <person name="Li X."/>
            <person name="Gerber S.A."/>
            <person name="Rudner A.D."/>
            <person name="Beausoleil S.A."/>
            <person name="Haas W."/>
            <person name="Villen J."/>
            <person name="Elias J.E."/>
            <person name="Gygi S.P."/>
        </authorList>
    </citation>
    <scope>PHOSPHORYLATION [LARGE SCALE ANALYSIS] AT SER-793 AND THR-1017</scope>
    <scope>IDENTIFICATION BY MASS SPECTROMETRY [LARGE SCALE ANALYSIS]</scope>
    <source>
        <strain>ADR376</strain>
    </source>
</reference>
<reference key="8">
    <citation type="journal article" date="2007" name="Proc. Natl. Acad. Sci. U.S.A.">
        <title>Analysis of phosphorylation sites on proteins from Saccharomyces cerevisiae by electron transfer dissociation (ETD) mass spectrometry.</title>
        <authorList>
            <person name="Chi A."/>
            <person name="Huttenhower C."/>
            <person name="Geer L.Y."/>
            <person name="Coon J.J."/>
            <person name="Syka J.E.P."/>
            <person name="Bai D.L."/>
            <person name="Shabanowitz J."/>
            <person name="Burke D.J."/>
            <person name="Troyanskaya O.G."/>
            <person name="Hunt D.F."/>
        </authorList>
    </citation>
    <scope>PHOSPHORYLATION [LARGE SCALE ANALYSIS] AT SER-344 AND SER-1070</scope>
    <scope>IDENTIFICATION BY MASS SPECTROMETRY [LARGE SCALE ANALYSIS]</scope>
</reference>
<reference key="9">
    <citation type="journal article" date="2008" name="Mol. Cell. Proteomics">
        <title>A multidimensional chromatography technology for in-depth phosphoproteome analysis.</title>
        <authorList>
            <person name="Albuquerque C.P."/>
            <person name="Smolka M.B."/>
            <person name="Payne S.H."/>
            <person name="Bafna V."/>
            <person name="Eng J."/>
            <person name="Zhou H."/>
        </authorList>
    </citation>
    <scope>PHOSPHORYLATION [LARGE SCALE ANALYSIS] AT THR-808 AND SER-1070</scope>
    <scope>IDENTIFICATION BY MASS SPECTROMETRY [LARGE SCALE ANALYSIS]</scope>
</reference>
<reference key="10">
    <citation type="journal article" date="2009" name="PLoS Genet.">
        <title>Identification of positive regulators of the yeast fps1 glycerol channel.</title>
        <authorList>
            <person name="Beese S.E."/>
            <person name="Negishi T."/>
            <person name="Levin D.E."/>
        </authorList>
    </citation>
    <scope>FUNCTION</scope>
    <scope>SUBCELLULAR LOCATION</scope>
    <scope>PHOSPHORYLATION</scope>
</reference>
<reference key="11">
    <citation type="journal article" date="2009" name="Science">
        <title>Global analysis of Cdk1 substrate phosphorylation sites provides insights into evolution.</title>
        <authorList>
            <person name="Holt L.J."/>
            <person name="Tuch B.B."/>
            <person name="Villen J."/>
            <person name="Johnson A.D."/>
            <person name="Gygi S.P."/>
            <person name="Morgan D.O."/>
        </authorList>
    </citation>
    <scope>PHOSPHORYLATION [LARGE SCALE ANALYSIS] AT SER-944; SER-969; SER-1070; SER-1095 AND SER-1098</scope>
    <scope>IDENTIFICATION BY MASS SPECTROMETRY [LARGE SCALE ANALYSIS]</scope>
</reference>
<accession>P48361</accession>
<accession>D6VUM9</accession>
<comment type="function">
    <text evidence="2 4">Positive regulator of FPS1 glycerol channel required for the glycerol efflux. As a component of the RNA polymerase II holoenzyme, is required for SSN8 destruction in response to oxidative stress but not heat shock. Required for cell survival in response to heat shock independent of SSN8.</text>
</comment>
<comment type="subunit">
    <text evidence="2">Component of the RNA polymerase II holoenzyme. Interacts with RPO21 and SSN8.</text>
</comment>
<comment type="subcellular location">
    <subcellularLocation>
        <location evidence="3 4">Cytoplasm</location>
    </subcellularLocation>
    <text>Displays diffuse cytoplasmic localization, but very rapidly aggregates into punctate spots that appear near the cell surface in response to hypo-osmotic shock.</text>
</comment>
<comment type="PTM">
    <text evidence="2 4">Phosphorylated in response to various stresses. stress-induced phosphorylation is partially dependent on HOG1.</text>
</comment>
<comment type="similarity">
    <text evidence="5">Belongs to the RGC1 family.</text>
</comment>
<keyword id="KW-0963">Cytoplasm</keyword>
<keyword id="KW-0597">Phosphoprotein</keyword>
<keyword id="KW-1185">Reference proteome</keyword>
<sequence length="1146" mass="126864">MSDYFSSRPSQTLTPMGNKPSGGGGGDDASSIHSKSSQYLMDILPDSMTLNESVSSIVANNQAKEFILPETDERSPYFINVPIPKAQPTSTTETKKPLAGDEAIDGQFVKEYPTDILVDRFYKWKKILKGLVIYLREVAYAQEQFARINYQLKGSVKFPFLTDIDETTNTITDPFTTAPRGPKKAQPAQKKVGLTDSEQFQMQMQQEQQENAVQAPTDESKMSLAPHEYKPVQTTESDNTSAASGFVKFGSGSIQDIQVILKKYHLSLANQQFKISKEITSTVIPKLEELRKDLRYKITEIKDLHGDFKTNIGAHIQLTSQLLKKYIAAVKFMNAHGIGNDRASPTNKKPHKLDPKHDPYLLKLQLDLQLKRQVAEETYLQEAFINLQSSGLQLEKIIYTKIQHALLRYSALIDSEARLMIKNMCQELQHGIISKPPAFEWDNFVTQHPSCLLNWKSNDPIPPPRKVSDVIYPHMKSPLAKCIKAGYFLKKSELLPTYHQGYFVLTSNYIHEFQSSDFYNLSSSTPNSTKSSAYSSSVSIADTYANANNAKANNHHRQASDVHNSSTTTGGTAGANGIRGIRKKSYLAPIMSIPLNDCTLKDASSTKFVLVGKPTLNENADVRKSSSSTYLSGSSQASLPKYGHETAKIFSKAPFHKFLKGSKPKNKNTKSSELDQFYAAAQKESNNYVTWTFKIVSPEPSEEELKHFKRWVQDLKNLTSFNDTKDRIKFIEDRVMKSHRFKAGHMSRNSVNIGSHTPCLTDSTFTLQDGTTTSVNLKGRAEKPQYIHIQNNSLADFDGNGFRSKVNTPAIDDYGNLITVERRPAQSPHQYSDYMATSGNTTPSYSSGSRPQSMYNGYNPAVSITSNGMMLQQSTANNNTNPTTNLRHQRNISQTSSLPGFSYTSLSLPVNSPGSSNSESSSGGYFAIPLHGNNNNNNYTQRNSEGSSPCYNDDQIRQQQQPLQMQPLSRTSSSSVNVTAMRSTSAGNSITANAPVVPKVMVNNQNVKTVAADQSATAPSSPTMNSSVTTINRESPYQTLKKTNSTGNVPCLTAEKTHAHPAFYKRGNNSAQNLTTSSSTASRVHPIRKHKKNVSFSSLNSLMFSKKGANHGGNLMTNQFMSGGIQEDDGDSTNNDTIKLNQSIYS</sequence>
<dbReference type="EMBL" id="U27209">
    <property type="protein sequence ID" value="AAA67368.1"/>
    <property type="molecule type" value="Genomic_DNA"/>
</dbReference>
<dbReference type="EMBL" id="Z72882">
    <property type="protein sequence ID" value="CAA97100.1"/>
    <property type="molecule type" value="Genomic_DNA"/>
</dbReference>
<dbReference type="EMBL" id="BK006941">
    <property type="protein sequence ID" value="DAA08190.1"/>
    <property type="molecule type" value="Genomic_DNA"/>
</dbReference>
<dbReference type="PIR" id="S64402">
    <property type="entry name" value="S64402"/>
</dbReference>
<dbReference type="RefSeq" id="NP_011611.1">
    <property type="nucleotide sequence ID" value="NM_001181226.1"/>
</dbReference>
<dbReference type="BioGRID" id="33340">
    <property type="interactions" value="653"/>
</dbReference>
<dbReference type="DIP" id="DIP-1920N"/>
<dbReference type="FunCoup" id="P48361">
    <property type="interactions" value="381"/>
</dbReference>
<dbReference type="IntAct" id="P48361">
    <property type="interactions" value="32"/>
</dbReference>
<dbReference type="MINT" id="P48361"/>
<dbReference type="STRING" id="4932.YGR097W"/>
<dbReference type="GlyGen" id="P48361">
    <property type="glycosylation" value="1 site, 1 O-linked glycan (1 site)"/>
</dbReference>
<dbReference type="iPTMnet" id="P48361"/>
<dbReference type="PaxDb" id="4932-YGR097W"/>
<dbReference type="PeptideAtlas" id="P48361"/>
<dbReference type="EnsemblFungi" id="YGR097W_mRNA">
    <property type="protein sequence ID" value="YGR097W"/>
    <property type="gene ID" value="YGR097W"/>
</dbReference>
<dbReference type="GeneID" id="852989"/>
<dbReference type="KEGG" id="sce:YGR097W"/>
<dbReference type="AGR" id="SGD:S000003329"/>
<dbReference type="SGD" id="S000003329">
    <property type="gene designation" value="ASK10"/>
</dbReference>
<dbReference type="VEuPathDB" id="FungiDB:YGR097W"/>
<dbReference type="eggNOG" id="ENOG502QU0Q">
    <property type="taxonomic scope" value="Eukaryota"/>
</dbReference>
<dbReference type="GeneTree" id="ENSGT00940000176324"/>
<dbReference type="HOGENOM" id="CLU_008754_0_0_1"/>
<dbReference type="InParanoid" id="P48361"/>
<dbReference type="OMA" id="DIRYPKM"/>
<dbReference type="OrthoDB" id="2264563at2759"/>
<dbReference type="BioCyc" id="YEAST:G3O-30807-MONOMER"/>
<dbReference type="BioGRID-ORCS" id="852989">
    <property type="hits" value="2 hits in 10 CRISPR screens"/>
</dbReference>
<dbReference type="PRO" id="PR:P48361"/>
<dbReference type="Proteomes" id="UP000002311">
    <property type="component" value="Chromosome VII"/>
</dbReference>
<dbReference type="RNAct" id="P48361">
    <property type="molecule type" value="protein"/>
</dbReference>
<dbReference type="GO" id="GO:0005737">
    <property type="term" value="C:cytoplasm"/>
    <property type="evidence" value="ECO:0000314"/>
    <property type="project" value="SGD"/>
</dbReference>
<dbReference type="GO" id="GO:0005886">
    <property type="term" value="C:plasma membrane"/>
    <property type="evidence" value="ECO:0000318"/>
    <property type="project" value="GO_Central"/>
</dbReference>
<dbReference type="GO" id="GO:0016247">
    <property type="term" value="F:channel regulator activity"/>
    <property type="evidence" value="ECO:0000315"/>
    <property type="project" value="SGD"/>
</dbReference>
<dbReference type="GO" id="GO:0030036">
    <property type="term" value="P:actin cytoskeleton organization"/>
    <property type="evidence" value="ECO:0000318"/>
    <property type="project" value="GO_Central"/>
</dbReference>
<dbReference type="GO" id="GO:0034599">
    <property type="term" value="P:cellular response to oxidative stress"/>
    <property type="evidence" value="ECO:0000315"/>
    <property type="project" value="SGD"/>
</dbReference>
<dbReference type="GO" id="GO:0090372">
    <property type="term" value="P:positive regulation of glycerol transport"/>
    <property type="evidence" value="ECO:0000315"/>
    <property type="project" value="SGD"/>
</dbReference>
<dbReference type="GO" id="GO:0030163">
    <property type="term" value="P:protein catabolic process"/>
    <property type="evidence" value="ECO:0000315"/>
    <property type="project" value="SGD"/>
</dbReference>
<dbReference type="Gene3D" id="2.30.29.30">
    <property type="entry name" value="Pleckstrin-homology domain (PH domain)/Phosphotyrosine-binding domain (PTB)"/>
    <property type="match status" value="1"/>
</dbReference>
<dbReference type="InterPro" id="IPR046868">
    <property type="entry name" value="BAR_4"/>
</dbReference>
<dbReference type="InterPro" id="IPR011993">
    <property type="entry name" value="PH-like_dom_sf"/>
</dbReference>
<dbReference type="InterPro" id="IPR001849">
    <property type="entry name" value="PH_domain"/>
</dbReference>
<dbReference type="InterPro" id="IPR046869">
    <property type="entry name" value="SLM1/RGC1-like_PH"/>
</dbReference>
<dbReference type="PANTHER" id="PTHR31941:SF15">
    <property type="entry name" value="ACTIVATOR OF SKN7 PROTEIN 10-RELATED"/>
    <property type="match status" value="1"/>
</dbReference>
<dbReference type="PANTHER" id="PTHR31941">
    <property type="entry name" value="CYTOSKELETAL SIGNALING PROTEIN SLM1"/>
    <property type="match status" value="1"/>
</dbReference>
<dbReference type="Pfam" id="PF20400">
    <property type="entry name" value="BAR_4"/>
    <property type="match status" value="1"/>
</dbReference>
<dbReference type="Pfam" id="PF20399">
    <property type="entry name" value="PH_20"/>
    <property type="match status" value="1"/>
</dbReference>
<dbReference type="SMART" id="SM00233">
    <property type="entry name" value="PH"/>
    <property type="match status" value="1"/>
</dbReference>
<dbReference type="SUPFAM" id="SSF50729">
    <property type="entry name" value="PH domain-like"/>
    <property type="match status" value="1"/>
</dbReference>
<evidence type="ECO:0000256" key="1">
    <source>
        <dbReference type="SAM" id="MobiDB-lite"/>
    </source>
</evidence>
<evidence type="ECO:0000269" key="2">
    <source>
    </source>
</evidence>
<evidence type="ECO:0000269" key="3">
    <source>
    </source>
</evidence>
<evidence type="ECO:0000269" key="4">
    <source>
    </source>
</evidence>
<evidence type="ECO:0000305" key="5"/>
<evidence type="ECO:0007744" key="6">
    <source>
    </source>
</evidence>
<evidence type="ECO:0007744" key="7">
    <source>
    </source>
</evidence>
<evidence type="ECO:0007744" key="8">
    <source>
    </source>
</evidence>
<evidence type="ECO:0007744" key="9">
    <source>
    </source>
</evidence>
<organism>
    <name type="scientific">Saccharomyces cerevisiae (strain ATCC 204508 / S288c)</name>
    <name type="common">Baker's yeast</name>
    <dbReference type="NCBI Taxonomy" id="559292"/>
    <lineage>
        <taxon>Eukaryota</taxon>
        <taxon>Fungi</taxon>
        <taxon>Dikarya</taxon>
        <taxon>Ascomycota</taxon>
        <taxon>Saccharomycotina</taxon>
        <taxon>Saccharomycetes</taxon>
        <taxon>Saccharomycetales</taxon>
        <taxon>Saccharomycetaceae</taxon>
        <taxon>Saccharomyces</taxon>
    </lineage>
</organism>